<gene>
    <name evidence="1" type="primary">psbC</name>
</gene>
<comment type="function">
    <text evidence="1">One of the components of the core complex of photosystem II (PSII). It binds chlorophyll and helps catalyze the primary light-induced photochemical processes of PSII. PSII is a light-driven water:plastoquinone oxidoreductase, using light energy to abstract electrons from H(2)O, generating O(2) and a proton gradient subsequently used for ATP formation.</text>
</comment>
<comment type="cofactor">
    <text evidence="1">Binds multiple chlorophylls and provides some of the ligands for the Ca-4Mn-5O cluster of the oxygen-evolving complex. It may also provide a ligand for a Cl- that is required for oxygen evolution. PSII binds additional chlorophylls, carotenoids and specific lipids.</text>
</comment>
<comment type="subunit">
    <text evidence="1">PSII is composed of 1 copy each of membrane proteins PsbA, PsbB, PsbC, PsbD, PsbE, PsbF, PsbH, PsbI, PsbJ, PsbK, PsbL, PsbM, PsbT, PsbX, PsbY, PsbZ, Psb30/Ycf12, at least 3 peripheral proteins of the oxygen-evolving complex and a large number of cofactors. It forms dimeric complexes.</text>
</comment>
<comment type="subcellular location">
    <subcellularLocation>
        <location evidence="1">Plastid</location>
        <location evidence="1">Chloroplast thylakoid membrane</location>
        <topology evidence="1">Multi-pass membrane protein</topology>
    </subcellularLocation>
</comment>
<comment type="similarity">
    <text evidence="1">Belongs to the PsbB/PsbC family. PsbC subfamily.</text>
</comment>
<reference key="1">
    <citation type="journal article" date="2008" name="BMC Res. Notes">
        <title>The complete chloroplast genome sequence of Brachypodium distachyon: sequence comparison and phylogenetic analysis of eight grass plastomes.</title>
        <authorList>
            <person name="Bortiri E."/>
            <person name="Coleman-Derr D."/>
            <person name="Lazo G.R."/>
            <person name="Anderson O.D."/>
            <person name="Gu Y.Q."/>
        </authorList>
    </citation>
    <scope>NUCLEOTIDE SEQUENCE [LARGE SCALE GENOMIC DNA]</scope>
    <source>
        <strain>cv. Bd21</strain>
    </source>
</reference>
<geneLocation type="chloroplast"/>
<dbReference type="EMBL" id="EU325680">
    <property type="protein sequence ID" value="ACF08627.1"/>
    <property type="molecule type" value="Genomic_DNA"/>
</dbReference>
<dbReference type="RefSeq" id="YP_002000474.1">
    <property type="nucleotide sequence ID" value="NC_011032.1"/>
</dbReference>
<dbReference type="SMR" id="B3TNB9"/>
<dbReference type="FunCoup" id="B3TNB9">
    <property type="interactions" value="416"/>
</dbReference>
<dbReference type="STRING" id="15368.B3TNB9"/>
<dbReference type="GeneID" id="6439864"/>
<dbReference type="KEGG" id="bdi:6439864"/>
<dbReference type="eggNOG" id="ENOG502QR3X">
    <property type="taxonomic scope" value="Eukaryota"/>
</dbReference>
<dbReference type="InParanoid" id="B3TNB9"/>
<dbReference type="Proteomes" id="UP000008810">
    <property type="component" value="Chloroplast"/>
</dbReference>
<dbReference type="ExpressionAtlas" id="B3TNB9">
    <property type="expression patterns" value="baseline"/>
</dbReference>
<dbReference type="GO" id="GO:0009535">
    <property type="term" value="C:chloroplast thylakoid membrane"/>
    <property type="evidence" value="ECO:0007669"/>
    <property type="project" value="UniProtKB-SubCell"/>
</dbReference>
<dbReference type="GO" id="GO:0009523">
    <property type="term" value="C:photosystem II"/>
    <property type="evidence" value="ECO:0007669"/>
    <property type="project" value="UniProtKB-KW"/>
</dbReference>
<dbReference type="GO" id="GO:0016168">
    <property type="term" value="F:chlorophyll binding"/>
    <property type="evidence" value="ECO:0007669"/>
    <property type="project" value="UniProtKB-UniRule"/>
</dbReference>
<dbReference type="GO" id="GO:0045156">
    <property type="term" value="F:electron transporter, transferring electrons within the cyclic electron transport pathway of photosynthesis activity"/>
    <property type="evidence" value="ECO:0007669"/>
    <property type="project" value="InterPro"/>
</dbReference>
<dbReference type="GO" id="GO:0046872">
    <property type="term" value="F:metal ion binding"/>
    <property type="evidence" value="ECO:0007669"/>
    <property type="project" value="UniProtKB-KW"/>
</dbReference>
<dbReference type="GO" id="GO:0009772">
    <property type="term" value="P:photosynthetic electron transport in photosystem II"/>
    <property type="evidence" value="ECO:0007669"/>
    <property type="project" value="InterPro"/>
</dbReference>
<dbReference type="FunFam" id="1.10.10.670:FF:000001">
    <property type="entry name" value="Photosystem II CP43 reaction center protein"/>
    <property type="match status" value="1"/>
</dbReference>
<dbReference type="Gene3D" id="1.10.10.670">
    <property type="entry name" value="photosystem ii from thermosynechococcus elongatus"/>
    <property type="match status" value="1"/>
</dbReference>
<dbReference type="HAMAP" id="MF_01496">
    <property type="entry name" value="PSII_PsbC_CP43"/>
    <property type="match status" value="1"/>
</dbReference>
<dbReference type="InterPro" id="IPR000932">
    <property type="entry name" value="PS_antenna-like"/>
</dbReference>
<dbReference type="InterPro" id="IPR036001">
    <property type="entry name" value="PS_II_antenna-like_sf"/>
</dbReference>
<dbReference type="InterPro" id="IPR005869">
    <property type="entry name" value="PSII_PsbC"/>
</dbReference>
<dbReference type="InterPro" id="IPR044900">
    <property type="entry name" value="PSII_PsbC_sf"/>
</dbReference>
<dbReference type="NCBIfam" id="TIGR01153">
    <property type="entry name" value="psbC"/>
    <property type="match status" value="1"/>
</dbReference>
<dbReference type="Pfam" id="PF00421">
    <property type="entry name" value="PSII"/>
    <property type="match status" value="1"/>
</dbReference>
<dbReference type="SUPFAM" id="SSF161077">
    <property type="entry name" value="Photosystem II antenna protein-like"/>
    <property type="match status" value="1"/>
</dbReference>
<sequence>MKILYSLRRFYHVETLFNGTFVLAGRDQETTGFAWWAGNARLINLSGKLLGAHVAHAGLIVFWAGAMNLFEVAHFVPEKPMYEQGLILLPHLATLGWGVGPGGEVLDTFPYFVSGVLHLISSAVLGFGGIYHALLGPETLEESFPFFGYVWKDRNKMTTILGIHLILLGLGAFLLVLKALYFGGVYDTWAPGGGDVRKITNLTLSPGVIFGYLLKSPFGGEGWIVSVDDLEDIIGGHVWLGFICVFGGIWHILTKPFAWARRAFVWSGEAYLSYSLAALSVFGFIACCFVWFNNTAYPSEFYGPTGPEASQAQAFTFLVRDQRLGANVGSAQGPTGLGKYLMRSPTGEVIFGGETMRFWDLRAPWLEPLRGPNGLDLSRLKKDIQPWQERRSAEYMTHAPLGSLNSVGGVATEINAVNYVSPRSWLSTSHFVLGFFFFVGHLWHAGRARAAAAGFEKGIDRDLEPVLYMNPLN</sequence>
<feature type="propeptide" id="PRO_0000431115" evidence="1">
    <location>
        <begin position="1"/>
        <end position="14"/>
    </location>
</feature>
<feature type="chain" id="PRO_0000361327" description="Photosystem II CP43 reaction center protein" evidence="1">
    <location>
        <begin position="15"/>
        <end position="473"/>
    </location>
</feature>
<feature type="transmembrane region" description="Helical" evidence="1">
    <location>
        <begin position="69"/>
        <end position="93"/>
    </location>
</feature>
<feature type="transmembrane region" description="Helical" evidence="1">
    <location>
        <begin position="134"/>
        <end position="155"/>
    </location>
</feature>
<feature type="transmembrane region" description="Helical" evidence="1">
    <location>
        <begin position="178"/>
        <end position="200"/>
    </location>
</feature>
<feature type="transmembrane region" description="Helical" evidence="1">
    <location>
        <begin position="255"/>
        <end position="275"/>
    </location>
</feature>
<feature type="transmembrane region" description="Helical" evidence="1">
    <location>
        <begin position="291"/>
        <end position="312"/>
    </location>
</feature>
<feature type="transmembrane region" description="Helical" evidence="1">
    <location>
        <begin position="447"/>
        <end position="471"/>
    </location>
</feature>
<feature type="binding site" evidence="1">
    <location>
        <position position="367"/>
    </location>
    <ligand>
        <name>[CaMn4O5] cluster</name>
        <dbReference type="ChEBI" id="CHEBI:189552"/>
    </ligand>
</feature>
<feature type="modified residue" description="N-acetylthreonine" evidence="1">
    <location>
        <position position="15"/>
    </location>
</feature>
<feature type="modified residue" description="Phosphothreonine" evidence="1">
    <location>
        <position position="15"/>
    </location>
</feature>
<organism>
    <name type="scientific">Brachypodium distachyon</name>
    <name type="common">Purple false brome</name>
    <name type="synonym">Trachynia distachya</name>
    <dbReference type="NCBI Taxonomy" id="15368"/>
    <lineage>
        <taxon>Eukaryota</taxon>
        <taxon>Viridiplantae</taxon>
        <taxon>Streptophyta</taxon>
        <taxon>Embryophyta</taxon>
        <taxon>Tracheophyta</taxon>
        <taxon>Spermatophyta</taxon>
        <taxon>Magnoliopsida</taxon>
        <taxon>Liliopsida</taxon>
        <taxon>Poales</taxon>
        <taxon>Poaceae</taxon>
        <taxon>BOP clade</taxon>
        <taxon>Pooideae</taxon>
        <taxon>Stipodae</taxon>
        <taxon>Brachypodieae</taxon>
        <taxon>Brachypodium</taxon>
    </lineage>
</organism>
<proteinExistence type="inferred from homology"/>
<evidence type="ECO:0000255" key="1">
    <source>
        <dbReference type="HAMAP-Rule" id="MF_01496"/>
    </source>
</evidence>
<name>PSBC_BRADI</name>
<accession>B3TNB9</accession>
<protein>
    <recommendedName>
        <fullName evidence="1">Photosystem II CP43 reaction center protein</fullName>
    </recommendedName>
    <alternativeName>
        <fullName evidence="1">PSII 43 kDa protein</fullName>
    </alternativeName>
    <alternativeName>
        <fullName evidence="1">Protein CP-43</fullName>
    </alternativeName>
</protein>
<keyword id="KW-0007">Acetylation</keyword>
<keyword id="KW-0148">Chlorophyll</keyword>
<keyword id="KW-0150">Chloroplast</keyword>
<keyword id="KW-0157">Chromophore</keyword>
<keyword id="KW-0464">Manganese</keyword>
<keyword id="KW-0472">Membrane</keyword>
<keyword id="KW-0479">Metal-binding</keyword>
<keyword id="KW-0597">Phosphoprotein</keyword>
<keyword id="KW-0602">Photosynthesis</keyword>
<keyword id="KW-0604">Photosystem II</keyword>
<keyword id="KW-0934">Plastid</keyword>
<keyword id="KW-1185">Reference proteome</keyword>
<keyword id="KW-0793">Thylakoid</keyword>
<keyword id="KW-0812">Transmembrane</keyword>
<keyword id="KW-1133">Transmembrane helix</keyword>